<organism>
    <name type="scientific">Maricaulis maris (strain MCS10)</name>
    <name type="common">Caulobacter maris</name>
    <dbReference type="NCBI Taxonomy" id="394221"/>
    <lineage>
        <taxon>Bacteria</taxon>
        <taxon>Pseudomonadati</taxon>
        <taxon>Pseudomonadota</taxon>
        <taxon>Alphaproteobacteria</taxon>
        <taxon>Maricaulales</taxon>
        <taxon>Maricaulaceae</taxon>
        <taxon>Maricaulis</taxon>
    </lineage>
</organism>
<keyword id="KW-0131">Cell cycle</keyword>
<keyword id="KW-0132">Cell division</keyword>
<keyword id="KW-0143">Chaperone</keyword>
<keyword id="KW-0963">Cytoplasm</keyword>
<keyword id="KW-0413">Isomerase</keyword>
<keyword id="KW-1185">Reference proteome</keyword>
<keyword id="KW-0697">Rotamase</keyword>
<evidence type="ECO:0000255" key="1">
    <source>
        <dbReference type="HAMAP-Rule" id="MF_00303"/>
    </source>
</evidence>
<evidence type="ECO:0000256" key="2">
    <source>
        <dbReference type="SAM" id="MobiDB-lite"/>
    </source>
</evidence>
<dbReference type="EC" id="5.2.1.8" evidence="1"/>
<dbReference type="EMBL" id="CP000449">
    <property type="protein sequence ID" value="ABI65629.1"/>
    <property type="molecule type" value="Genomic_DNA"/>
</dbReference>
<dbReference type="RefSeq" id="WP_011643276.1">
    <property type="nucleotide sequence ID" value="NC_008347.1"/>
</dbReference>
<dbReference type="SMR" id="Q0AQ08"/>
<dbReference type="STRING" id="394221.Mmar10_1337"/>
<dbReference type="KEGG" id="mmr:Mmar10_1337"/>
<dbReference type="eggNOG" id="COG0544">
    <property type="taxonomic scope" value="Bacteria"/>
</dbReference>
<dbReference type="HOGENOM" id="CLU_033058_2_2_5"/>
<dbReference type="OrthoDB" id="9767721at2"/>
<dbReference type="Proteomes" id="UP000001964">
    <property type="component" value="Chromosome"/>
</dbReference>
<dbReference type="GO" id="GO:0005737">
    <property type="term" value="C:cytoplasm"/>
    <property type="evidence" value="ECO:0007669"/>
    <property type="project" value="UniProtKB-SubCell"/>
</dbReference>
<dbReference type="GO" id="GO:0003755">
    <property type="term" value="F:peptidyl-prolyl cis-trans isomerase activity"/>
    <property type="evidence" value="ECO:0007669"/>
    <property type="project" value="UniProtKB-UniRule"/>
</dbReference>
<dbReference type="GO" id="GO:0044183">
    <property type="term" value="F:protein folding chaperone"/>
    <property type="evidence" value="ECO:0007669"/>
    <property type="project" value="TreeGrafter"/>
</dbReference>
<dbReference type="GO" id="GO:0043022">
    <property type="term" value="F:ribosome binding"/>
    <property type="evidence" value="ECO:0007669"/>
    <property type="project" value="TreeGrafter"/>
</dbReference>
<dbReference type="GO" id="GO:0051083">
    <property type="term" value="P:'de novo' cotranslational protein folding"/>
    <property type="evidence" value="ECO:0007669"/>
    <property type="project" value="TreeGrafter"/>
</dbReference>
<dbReference type="GO" id="GO:0051301">
    <property type="term" value="P:cell division"/>
    <property type="evidence" value="ECO:0007669"/>
    <property type="project" value="UniProtKB-KW"/>
</dbReference>
<dbReference type="GO" id="GO:0061077">
    <property type="term" value="P:chaperone-mediated protein folding"/>
    <property type="evidence" value="ECO:0007669"/>
    <property type="project" value="TreeGrafter"/>
</dbReference>
<dbReference type="GO" id="GO:0015031">
    <property type="term" value="P:protein transport"/>
    <property type="evidence" value="ECO:0007669"/>
    <property type="project" value="UniProtKB-UniRule"/>
</dbReference>
<dbReference type="GO" id="GO:0043335">
    <property type="term" value="P:protein unfolding"/>
    <property type="evidence" value="ECO:0007669"/>
    <property type="project" value="TreeGrafter"/>
</dbReference>
<dbReference type="FunFam" id="3.10.50.40:FF:000001">
    <property type="entry name" value="Trigger factor"/>
    <property type="match status" value="1"/>
</dbReference>
<dbReference type="Gene3D" id="3.10.50.40">
    <property type="match status" value="1"/>
</dbReference>
<dbReference type="Gene3D" id="3.30.70.1050">
    <property type="entry name" value="Trigger factor ribosome-binding domain"/>
    <property type="match status" value="1"/>
</dbReference>
<dbReference type="Gene3D" id="1.10.3120.10">
    <property type="entry name" value="Trigger factor, C-terminal domain"/>
    <property type="match status" value="1"/>
</dbReference>
<dbReference type="HAMAP" id="MF_00303">
    <property type="entry name" value="Trigger_factor_Tig"/>
    <property type="match status" value="1"/>
</dbReference>
<dbReference type="InterPro" id="IPR046357">
    <property type="entry name" value="PPIase_dom_sf"/>
</dbReference>
<dbReference type="InterPro" id="IPR001179">
    <property type="entry name" value="PPIase_FKBP_dom"/>
</dbReference>
<dbReference type="InterPro" id="IPR005215">
    <property type="entry name" value="Trig_fac"/>
</dbReference>
<dbReference type="InterPro" id="IPR008880">
    <property type="entry name" value="Trigger_fac_C"/>
</dbReference>
<dbReference type="InterPro" id="IPR037041">
    <property type="entry name" value="Trigger_fac_C_sf"/>
</dbReference>
<dbReference type="InterPro" id="IPR008881">
    <property type="entry name" value="Trigger_fac_ribosome-bd_bac"/>
</dbReference>
<dbReference type="InterPro" id="IPR036611">
    <property type="entry name" value="Trigger_fac_ribosome-bd_sf"/>
</dbReference>
<dbReference type="InterPro" id="IPR027304">
    <property type="entry name" value="Trigger_fact/SurA_dom_sf"/>
</dbReference>
<dbReference type="NCBIfam" id="TIGR00115">
    <property type="entry name" value="tig"/>
    <property type="match status" value="1"/>
</dbReference>
<dbReference type="PANTHER" id="PTHR30560">
    <property type="entry name" value="TRIGGER FACTOR CHAPERONE AND PEPTIDYL-PROLYL CIS/TRANS ISOMERASE"/>
    <property type="match status" value="1"/>
</dbReference>
<dbReference type="PANTHER" id="PTHR30560:SF3">
    <property type="entry name" value="TRIGGER FACTOR-LIKE PROTEIN TIG, CHLOROPLASTIC"/>
    <property type="match status" value="1"/>
</dbReference>
<dbReference type="Pfam" id="PF00254">
    <property type="entry name" value="FKBP_C"/>
    <property type="match status" value="1"/>
</dbReference>
<dbReference type="Pfam" id="PF05698">
    <property type="entry name" value="Trigger_C"/>
    <property type="match status" value="1"/>
</dbReference>
<dbReference type="Pfam" id="PF05697">
    <property type="entry name" value="Trigger_N"/>
    <property type="match status" value="1"/>
</dbReference>
<dbReference type="SUPFAM" id="SSF54534">
    <property type="entry name" value="FKBP-like"/>
    <property type="match status" value="1"/>
</dbReference>
<dbReference type="SUPFAM" id="SSF109998">
    <property type="entry name" value="Triger factor/SurA peptide-binding domain-like"/>
    <property type="match status" value="1"/>
</dbReference>
<dbReference type="SUPFAM" id="SSF102735">
    <property type="entry name" value="Trigger factor ribosome-binding domain"/>
    <property type="match status" value="1"/>
</dbReference>
<dbReference type="PROSITE" id="PS50059">
    <property type="entry name" value="FKBP_PPIASE"/>
    <property type="match status" value="1"/>
</dbReference>
<gene>
    <name evidence="1" type="primary">tig</name>
    <name type="ordered locus">Mmar10_1337</name>
</gene>
<protein>
    <recommendedName>
        <fullName evidence="1">Trigger factor</fullName>
        <shortName evidence="1">TF</shortName>
        <ecNumber evidence="1">5.2.1.8</ecNumber>
    </recommendedName>
    <alternativeName>
        <fullName evidence="1">PPIase</fullName>
    </alternativeName>
</protein>
<comment type="function">
    <text evidence="1">Involved in protein export. Acts as a chaperone by maintaining the newly synthesized protein in an open conformation. Functions as a peptidyl-prolyl cis-trans isomerase.</text>
</comment>
<comment type="catalytic activity">
    <reaction evidence="1">
        <text>[protein]-peptidylproline (omega=180) = [protein]-peptidylproline (omega=0)</text>
        <dbReference type="Rhea" id="RHEA:16237"/>
        <dbReference type="Rhea" id="RHEA-COMP:10747"/>
        <dbReference type="Rhea" id="RHEA-COMP:10748"/>
        <dbReference type="ChEBI" id="CHEBI:83833"/>
        <dbReference type="ChEBI" id="CHEBI:83834"/>
        <dbReference type="EC" id="5.2.1.8"/>
    </reaction>
</comment>
<comment type="subcellular location">
    <subcellularLocation>
        <location>Cytoplasm</location>
    </subcellularLocation>
    <text evidence="1">About half TF is bound to the ribosome near the polypeptide exit tunnel while the other half is free in the cytoplasm.</text>
</comment>
<comment type="domain">
    <text evidence="1">Consists of 3 domains; the N-terminus binds the ribosome, the middle domain has PPIase activity, while the C-terminus has intrinsic chaperone activity on its own.</text>
</comment>
<comment type="similarity">
    <text evidence="1">Belongs to the FKBP-type PPIase family. Tig subfamily.</text>
</comment>
<name>TIG_MARMM</name>
<reference key="1">
    <citation type="submission" date="2006-08" db="EMBL/GenBank/DDBJ databases">
        <title>Complete sequence of Maricaulis maris MCS10.</title>
        <authorList>
            <consortium name="US DOE Joint Genome Institute"/>
            <person name="Copeland A."/>
            <person name="Lucas S."/>
            <person name="Lapidus A."/>
            <person name="Barry K."/>
            <person name="Detter J.C."/>
            <person name="Glavina del Rio T."/>
            <person name="Hammon N."/>
            <person name="Israni S."/>
            <person name="Dalin E."/>
            <person name="Tice H."/>
            <person name="Pitluck S."/>
            <person name="Saunders E."/>
            <person name="Brettin T."/>
            <person name="Bruce D."/>
            <person name="Han C."/>
            <person name="Tapia R."/>
            <person name="Gilna P."/>
            <person name="Schmutz J."/>
            <person name="Larimer F."/>
            <person name="Land M."/>
            <person name="Hauser L."/>
            <person name="Kyrpides N."/>
            <person name="Mikhailova N."/>
            <person name="Viollier P."/>
            <person name="Stephens C."/>
            <person name="Richardson P."/>
        </authorList>
    </citation>
    <scope>NUCLEOTIDE SEQUENCE [LARGE SCALE GENOMIC DNA]</scope>
    <source>
        <strain>MCS10</strain>
    </source>
</reference>
<proteinExistence type="inferred from homology"/>
<sequence length="518" mass="56821">MNVIEKASEGLSRTYEIVIPADDLQARLAAKIEEIRPEVRLKGFRPGKVPTSHIRKMFGESIMGDLLNELVPDTTQKTLDEKKLRPASQPDISVTSEAKDVLAGKADFVFEIALEIMPDFEPADPAKLSVTRPVAEVEDAEVDEALERLANESREFAAKKGGKNAKAEDGDVVVIDFVGKLDGEVFEGGSAEDARVAIGDGAFIPGFEEQLLGAKVGEERELNVTFPEDYQAAQLAGKAAVFDVTVKGLESPQEAKVDDELAKRLGLENLDGLKDALKKRFAGEHGQQSRMKVKRDLLDKLDAEHKFDLPPKMVGAEFDNIWREVAHAIEQDQLEDEDKNKSEDELKSEYREIAERRVRLGLVLAEIGRRNNIDVTQEELSRAINQEAVKYPGQERQVVEFYQKNPNAVAQMRAPIYEEKVVDYILELADVTETTVSKEALYADEDEAPAKPAKKAVAKKKAPAKKAAAKSDDKPAAKKAPAKKAPAKKAAAKDEAPAKKPAAKKKAPAKKAAAKKDA</sequence>
<accession>Q0AQ08</accession>
<feature type="chain" id="PRO_1000022707" description="Trigger factor">
    <location>
        <begin position="1"/>
        <end position="518"/>
    </location>
</feature>
<feature type="domain" description="PPIase FKBP-type" evidence="1">
    <location>
        <begin position="170"/>
        <end position="255"/>
    </location>
</feature>
<feature type="region of interest" description="Disordered" evidence="2">
    <location>
        <begin position="447"/>
        <end position="518"/>
    </location>
</feature>
<feature type="compositionally biased region" description="Basic residues" evidence="2">
    <location>
        <begin position="452"/>
        <end position="468"/>
    </location>
</feature>
<feature type="compositionally biased region" description="Basic residues" evidence="2">
    <location>
        <begin position="501"/>
        <end position="518"/>
    </location>
</feature>